<sequence>MLFGRLTERAQRVLAHAQEEAIRLNHSNIGTEHLLLGLMKEPEGIAAKVLESFNITEDKVIEEVEKLIGHGQDHVGTLHYTPRAKKVIELSMDEARKLHHNFVGTEHILLGLIRENEGVAARVFANLDLNITKARAQVVKALGNPEMSNKNAQASKSNNTPTLDSLARDLTVIAKDGTLDPVIGRDKEITRVIEVLSRRTKNNPVLIGEPGVGKTAIAEGLAQAIVNNEVPETLKDKRVMSLDMGTVVAGTKYRGEFEERLKKVMEEIQQAGNVILFIDELHTLVGAGGAEGAIDASNILKPALARGELQCIGATTLDEYRKNIEKDAALERRFQPVQVDEPSVVDTVAILKGLRDRYEAHHRINISDEAIEAAVKLSNRYVSDRFLPDKAIDLIDEASSKVRLKSHTTPNNLKEIEQEIEKVKNEKDAAVHAQEFENAANLRDKQTKLEKQYEEAKNEWKNAQNGMSTSLSEEDIAEVIAGWTGIPLTKINETESEKLLSLEDTLHERVIGQKDAVNSISKAVRRARAGLKDPKRPIGSFIFLGPTGVGKTELARALAESMFGDDDAMIRVDMSEFMEKHAVSRLVGAPPGYVGHDDGGQLTEKVRRKPYSVILFDEIEKAHPDVFNILLQVLDDGHLTDTKGRTVDFRNTIIIMTSNVGAQELQDQRFAGFGGSSDGQDYETIRKTMLKELKNSFRPEFLNRVDDIIVFHKLTKEELKEIVTMMVNKLTNRLSEQNINIIVTDKAKDKIAEEGYDPEYGARPLIRAIQKTIEDNLSELILDGNQIEGKKVTVDHDGKEFKYDIAEQTSETKTPSQA</sequence>
<dbReference type="EMBL" id="BA000018">
    <property type="protein sequence ID" value="BAB41713.1"/>
    <property type="molecule type" value="Genomic_DNA"/>
</dbReference>
<dbReference type="PIR" id="F89819">
    <property type="entry name" value="F89819"/>
</dbReference>
<dbReference type="RefSeq" id="WP_000897132.1">
    <property type="nucleotide sequence ID" value="NC_002745.2"/>
</dbReference>
<dbReference type="SMR" id="Q7A797"/>
<dbReference type="EnsemblBacteria" id="BAB41713">
    <property type="protein sequence ID" value="BAB41713"/>
    <property type="gene ID" value="BAB41713"/>
</dbReference>
<dbReference type="KEGG" id="sau:SA0483"/>
<dbReference type="HOGENOM" id="CLU_005070_4_1_9"/>
<dbReference type="GO" id="GO:0005737">
    <property type="term" value="C:cytoplasm"/>
    <property type="evidence" value="ECO:0007669"/>
    <property type="project" value="TreeGrafter"/>
</dbReference>
<dbReference type="GO" id="GO:0005524">
    <property type="term" value="F:ATP binding"/>
    <property type="evidence" value="ECO:0007669"/>
    <property type="project" value="UniProtKB-KW"/>
</dbReference>
<dbReference type="GO" id="GO:0016887">
    <property type="term" value="F:ATP hydrolysis activity"/>
    <property type="evidence" value="ECO:0007669"/>
    <property type="project" value="InterPro"/>
</dbReference>
<dbReference type="GO" id="GO:0034605">
    <property type="term" value="P:cellular response to heat"/>
    <property type="evidence" value="ECO:0007669"/>
    <property type="project" value="TreeGrafter"/>
</dbReference>
<dbReference type="CDD" id="cd00009">
    <property type="entry name" value="AAA"/>
    <property type="match status" value="1"/>
</dbReference>
<dbReference type="CDD" id="cd19499">
    <property type="entry name" value="RecA-like_ClpB_Hsp104-like"/>
    <property type="match status" value="1"/>
</dbReference>
<dbReference type="FunFam" id="1.10.8.60:FF:000017">
    <property type="entry name" value="ATP-dependent chaperone ClpB"/>
    <property type="match status" value="1"/>
</dbReference>
<dbReference type="FunFam" id="1.10.8.60:FF:000011">
    <property type="entry name" value="ATP-dependent Clp protease ATP-binding subunit"/>
    <property type="match status" value="1"/>
</dbReference>
<dbReference type="FunFam" id="3.40.50.300:FF:000025">
    <property type="entry name" value="ATP-dependent Clp protease subunit"/>
    <property type="match status" value="1"/>
</dbReference>
<dbReference type="FunFam" id="3.40.50.300:FF:000010">
    <property type="entry name" value="Chaperone clpB 1, putative"/>
    <property type="match status" value="1"/>
</dbReference>
<dbReference type="Gene3D" id="1.10.8.60">
    <property type="match status" value="2"/>
</dbReference>
<dbReference type="Gene3D" id="1.10.1780.10">
    <property type="entry name" value="Clp, N-terminal domain"/>
    <property type="match status" value="1"/>
</dbReference>
<dbReference type="Gene3D" id="3.40.50.300">
    <property type="entry name" value="P-loop containing nucleotide triphosphate hydrolases"/>
    <property type="match status" value="2"/>
</dbReference>
<dbReference type="Gene3D" id="4.10.860.10">
    <property type="entry name" value="UVR domain"/>
    <property type="match status" value="1"/>
</dbReference>
<dbReference type="InterPro" id="IPR003593">
    <property type="entry name" value="AAA+_ATPase"/>
</dbReference>
<dbReference type="InterPro" id="IPR003959">
    <property type="entry name" value="ATPase_AAA_core"/>
</dbReference>
<dbReference type="InterPro" id="IPR019489">
    <property type="entry name" value="Clp_ATPase_C"/>
</dbReference>
<dbReference type="InterPro" id="IPR036628">
    <property type="entry name" value="Clp_N_dom_sf"/>
</dbReference>
<dbReference type="InterPro" id="IPR004176">
    <property type="entry name" value="Clp_R_dom"/>
</dbReference>
<dbReference type="InterPro" id="IPR001270">
    <property type="entry name" value="ClpA/B"/>
</dbReference>
<dbReference type="InterPro" id="IPR018368">
    <property type="entry name" value="ClpA/B_CS1"/>
</dbReference>
<dbReference type="InterPro" id="IPR028299">
    <property type="entry name" value="ClpA/B_CS2"/>
</dbReference>
<dbReference type="InterPro" id="IPR041546">
    <property type="entry name" value="ClpA/ClpB_AAA_lid"/>
</dbReference>
<dbReference type="InterPro" id="IPR050130">
    <property type="entry name" value="ClpA_ClpB"/>
</dbReference>
<dbReference type="InterPro" id="IPR027417">
    <property type="entry name" value="P-loop_NTPase"/>
</dbReference>
<dbReference type="InterPro" id="IPR001943">
    <property type="entry name" value="UVR_dom"/>
</dbReference>
<dbReference type="PANTHER" id="PTHR11638">
    <property type="entry name" value="ATP-DEPENDENT CLP PROTEASE"/>
    <property type="match status" value="1"/>
</dbReference>
<dbReference type="PANTHER" id="PTHR11638:SF18">
    <property type="entry name" value="HEAT SHOCK PROTEIN 104"/>
    <property type="match status" value="1"/>
</dbReference>
<dbReference type="Pfam" id="PF00004">
    <property type="entry name" value="AAA"/>
    <property type="match status" value="1"/>
</dbReference>
<dbReference type="Pfam" id="PF07724">
    <property type="entry name" value="AAA_2"/>
    <property type="match status" value="1"/>
</dbReference>
<dbReference type="Pfam" id="PF17871">
    <property type="entry name" value="AAA_lid_9"/>
    <property type="match status" value="1"/>
</dbReference>
<dbReference type="Pfam" id="PF02861">
    <property type="entry name" value="Clp_N"/>
    <property type="match status" value="2"/>
</dbReference>
<dbReference type="Pfam" id="PF10431">
    <property type="entry name" value="ClpB_D2-small"/>
    <property type="match status" value="1"/>
</dbReference>
<dbReference type="PRINTS" id="PR00300">
    <property type="entry name" value="CLPPROTEASEA"/>
</dbReference>
<dbReference type="SMART" id="SM00382">
    <property type="entry name" value="AAA"/>
    <property type="match status" value="2"/>
</dbReference>
<dbReference type="SMART" id="SM01086">
    <property type="entry name" value="ClpB_D2-small"/>
    <property type="match status" value="1"/>
</dbReference>
<dbReference type="SUPFAM" id="SSF81923">
    <property type="entry name" value="Double Clp-N motif"/>
    <property type="match status" value="1"/>
</dbReference>
<dbReference type="SUPFAM" id="SSF52540">
    <property type="entry name" value="P-loop containing nucleoside triphosphate hydrolases"/>
    <property type="match status" value="2"/>
</dbReference>
<dbReference type="PROSITE" id="PS51903">
    <property type="entry name" value="CLP_R"/>
    <property type="match status" value="1"/>
</dbReference>
<dbReference type="PROSITE" id="PS00870">
    <property type="entry name" value="CLPAB_1"/>
    <property type="match status" value="1"/>
</dbReference>
<dbReference type="PROSITE" id="PS00871">
    <property type="entry name" value="CLPAB_2"/>
    <property type="match status" value="1"/>
</dbReference>
<dbReference type="PROSITE" id="PS50151">
    <property type="entry name" value="UVR"/>
    <property type="match status" value="1"/>
</dbReference>
<reference key="1">
    <citation type="journal article" date="2001" name="Lancet">
        <title>Whole genome sequencing of meticillin-resistant Staphylococcus aureus.</title>
        <authorList>
            <person name="Kuroda M."/>
            <person name="Ohta T."/>
            <person name="Uchiyama I."/>
            <person name="Baba T."/>
            <person name="Yuzawa H."/>
            <person name="Kobayashi I."/>
            <person name="Cui L."/>
            <person name="Oguchi A."/>
            <person name="Aoki K."/>
            <person name="Nagai Y."/>
            <person name="Lian J.-Q."/>
            <person name="Ito T."/>
            <person name="Kanamori M."/>
            <person name="Matsumaru H."/>
            <person name="Maruyama A."/>
            <person name="Murakami H."/>
            <person name="Hosoyama A."/>
            <person name="Mizutani-Ui Y."/>
            <person name="Takahashi N.K."/>
            <person name="Sawano T."/>
            <person name="Inoue R."/>
            <person name="Kaito C."/>
            <person name="Sekimizu K."/>
            <person name="Hirakawa H."/>
            <person name="Kuhara S."/>
            <person name="Goto S."/>
            <person name="Yabuzaki J."/>
            <person name="Kanehisa M."/>
            <person name="Yamashita A."/>
            <person name="Oshima K."/>
            <person name="Furuya K."/>
            <person name="Yoshino C."/>
            <person name="Shiba T."/>
            <person name="Hattori M."/>
            <person name="Ogasawara N."/>
            <person name="Hayashi H."/>
            <person name="Hiramatsu K."/>
        </authorList>
    </citation>
    <scope>NUCLEOTIDE SEQUENCE [LARGE SCALE GENOMIC DNA]</scope>
    <source>
        <strain>N315</strain>
    </source>
</reference>
<reference key="2">
    <citation type="submission" date="2007-10" db="UniProtKB">
        <title>Shotgun proteomic analysis of total and membrane protein extracts of S. aureus strain N315.</title>
        <authorList>
            <person name="Vaezzadeh A.R."/>
            <person name="Deshusses J."/>
            <person name="Lescuyer P."/>
            <person name="Hochstrasser D.F."/>
        </authorList>
    </citation>
    <scope>IDENTIFICATION BY MASS SPECTROMETRY [LARGE SCALE ANALYSIS]</scope>
    <source>
        <strain>N315</strain>
    </source>
</reference>
<proteinExistence type="evidence at protein level"/>
<accession>Q7A797</accession>
<organism>
    <name type="scientific">Staphylococcus aureus (strain N315)</name>
    <dbReference type="NCBI Taxonomy" id="158879"/>
    <lineage>
        <taxon>Bacteria</taxon>
        <taxon>Bacillati</taxon>
        <taxon>Bacillota</taxon>
        <taxon>Bacilli</taxon>
        <taxon>Bacillales</taxon>
        <taxon>Staphylococcaceae</taxon>
        <taxon>Staphylococcus</taxon>
    </lineage>
</organism>
<protein>
    <recommendedName>
        <fullName>ATP-dependent Clp protease ATP-binding subunit ClpC</fullName>
    </recommendedName>
</protein>
<keyword id="KW-0067">ATP-binding</keyword>
<keyword id="KW-0143">Chaperone</keyword>
<keyword id="KW-0547">Nucleotide-binding</keyword>
<keyword id="KW-0677">Repeat</keyword>
<keyword id="KW-0346">Stress response</keyword>
<gene>
    <name type="primary">clpC</name>
    <name type="ordered locus">SA0483</name>
</gene>
<name>CLPC_STAAN</name>
<feature type="chain" id="PRO_0000269684" description="ATP-dependent Clp protease ATP-binding subunit ClpC">
    <location>
        <begin position="1"/>
        <end position="818"/>
    </location>
</feature>
<feature type="domain" description="Clp R" evidence="4">
    <location>
        <begin position="3"/>
        <end position="144"/>
    </location>
</feature>
<feature type="domain" description="UVR" evidence="3">
    <location>
        <begin position="417"/>
        <end position="452"/>
    </location>
</feature>
<feature type="region of interest" description="Repeat 1" evidence="4">
    <location>
        <begin position="6"/>
        <end position="71"/>
    </location>
</feature>
<feature type="region of interest" description="Repeat 2" evidence="4">
    <location>
        <begin position="80"/>
        <end position="144"/>
    </location>
</feature>
<feature type="region of interest" description="I">
    <location>
        <begin position="163"/>
        <end position="410"/>
    </location>
</feature>
<feature type="region of interest" description="II">
    <location>
        <begin position="471"/>
        <end position="662"/>
    </location>
</feature>
<feature type="binding site" evidence="2">
    <location>
        <begin position="208"/>
        <end position="215"/>
    </location>
    <ligand>
        <name>ATP</name>
        <dbReference type="ChEBI" id="CHEBI:30616"/>
    </ligand>
</feature>
<feature type="binding site" evidence="2">
    <location>
        <begin position="545"/>
        <end position="552"/>
    </location>
    <ligand>
        <name>ATP</name>
        <dbReference type="ChEBI" id="CHEBI:30616"/>
    </ligand>
</feature>
<comment type="function">
    <text evidence="1">Required for growth at high temperatures, probably by acting as a chaperone during heat shock and targeting heat-denatured proteins for degradation by ClpP.</text>
</comment>
<comment type="similarity">
    <text evidence="5">Belongs to the ClpA/ClpB family. ClpC subfamily.</text>
</comment>
<evidence type="ECO:0000250" key="1"/>
<evidence type="ECO:0000255" key="2"/>
<evidence type="ECO:0000255" key="3">
    <source>
        <dbReference type="PROSITE-ProRule" id="PRU00217"/>
    </source>
</evidence>
<evidence type="ECO:0000255" key="4">
    <source>
        <dbReference type="PROSITE-ProRule" id="PRU01251"/>
    </source>
</evidence>
<evidence type="ECO:0000305" key="5"/>